<comment type="function">
    <text evidence="1">Catalyzes the conversion of acetate into acetyl-CoA (AcCoA), an essential intermediate at the junction of anabolic and catabolic pathways. AcsA undergoes a two-step reaction. In the first half reaction, AcsA combines acetate with ATP to form acetyl-adenylate (AcAMP) intermediate. In the second half reaction, it can then transfer the acetyl group from AcAMP to the sulfhydryl group of CoA, forming the product AcCoA.</text>
</comment>
<comment type="catalytic activity">
    <reaction evidence="1">
        <text>acetate + ATP + CoA = acetyl-CoA + AMP + diphosphate</text>
        <dbReference type="Rhea" id="RHEA:23176"/>
        <dbReference type="ChEBI" id="CHEBI:30089"/>
        <dbReference type="ChEBI" id="CHEBI:30616"/>
        <dbReference type="ChEBI" id="CHEBI:33019"/>
        <dbReference type="ChEBI" id="CHEBI:57287"/>
        <dbReference type="ChEBI" id="CHEBI:57288"/>
        <dbReference type="ChEBI" id="CHEBI:456215"/>
        <dbReference type="EC" id="6.2.1.1"/>
    </reaction>
</comment>
<comment type="cofactor">
    <cofactor evidence="1">
        <name>Mg(2+)</name>
        <dbReference type="ChEBI" id="CHEBI:18420"/>
    </cofactor>
</comment>
<comment type="PTM">
    <text evidence="1">Acetylated. Deacetylation by the SIR2-homolog deacetylase activates the enzyme.</text>
</comment>
<comment type="similarity">
    <text evidence="1">Belongs to the ATP-dependent AMP-binding enzyme family.</text>
</comment>
<proteinExistence type="inferred from homology"/>
<feature type="chain" id="PRO_0000208380" description="Acetyl-coenzyme A synthetase">
    <location>
        <begin position="1"/>
        <end position="651"/>
    </location>
</feature>
<feature type="binding site" evidence="1">
    <location>
        <begin position="190"/>
        <end position="193"/>
    </location>
    <ligand>
        <name>CoA</name>
        <dbReference type="ChEBI" id="CHEBI:57287"/>
    </ligand>
</feature>
<feature type="binding site" evidence="1">
    <location>
        <position position="312"/>
    </location>
    <ligand>
        <name>CoA</name>
        <dbReference type="ChEBI" id="CHEBI:57287"/>
    </ligand>
</feature>
<feature type="binding site" evidence="1">
    <location>
        <position position="336"/>
    </location>
    <ligand>
        <name>CoA</name>
        <dbReference type="ChEBI" id="CHEBI:57287"/>
    </ligand>
</feature>
<feature type="binding site" evidence="1">
    <location>
        <begin position="388"/>
        <end position="390"/>
    </location>
    <ligand>
        <name>ATP</name>
        <dbReference type="ChEBI" id="CHEBI:30616"/>
    </ligand>
</feature>
<feature type="binding site" evidence="1">
    <location>
        <begin position="412"/>
        <end position="417"/>
    </location>
    <ligand>
        <name>ATP</name>
        <dbReference type="ChEBI" id="CHEBI:30616"/>
    </ligand>
</feature>
<feature type="binding site" evidence="1">
    <location>
        <position position="501"/>
    </location>
    <ligand>
        <name>ATP</name>
        <dbReference type="ChEBI" id="CHEBI:30616"/>
    </ligand>
</feature>
<feature type="binding site" evidence="1">
    <location>
        <position position="516"/>
    </location>
    <ligand>
        <name>ATP</name>
        <dbReference type="ChEBI" id="CHEBI:30616"/>
    </ligand>
</feature>
<feature type="binding site" evidence="1">
    <location>
        <position position="524"/>
    </location>
    <ligand>
        <name>CoA</name>
        <dbReference type="ChEBI" id="CHEBI:57287"/>
    </ligand>
</feature>
<feature type="binding site" evidence="1">
    <location>
        <position position="527"/>
    </location>
    <ligand>
        <name>ATP</name>
        <dbReference type="ChEBI" id="CHEBI:30616"/>
    </ligand>
</feature>
<feature type="binding site" evidence="1">
    <location>
        <position position="538"/>
    </location>
    <ligand>
        <name>Mg(2+)</name>
        <dbReference type="ChEBI" id="CHEBI:18420"/>
    </ligand>
</feature>
<feature type="binding site" evidence="1">
    <location>
        <position position="540"/>
    </location>
    <ligand>
        <name>Mg(2+)</name>
        <dbReference type="ChEBI" id="CHEBI:18420"/>
    </ligand>
</feature>
<feature type="binding site" evidence="1">
    <location>
        <position position="543"/>
    </location>
    <ligand>
        <name>Mg(2+)</name>
        <dbReference type="ChEBI" id="CHEBI:18420"/>
    </ligand>
</feature>
<feature type="binding site" evidence="1">
    <location>
        <position position="585"/>
    </location>
    <ligand>
        <name>CoA</name>
        <dbReference type="ChEBI" id="CHEBI:57287"/>
    </ligand>
</feature>
<feature type="modified residue" description="N6-acetyllysine" evidence="1">
    <location>
        <position position="610"/>
    </location>
</feature>
<evidence type="ECO:0000255" key="1">
    <source>
        <dbReference type="HAMAP-Rule" id="MF_01123"/>
    </source>
</evidence>
<protein>
    <recommendedName>
        <fullName evidence="1">Acetyl-coenzyme A synthetase</fullName>
        <shortName evidence="1">AcCoA synthetase</shortName>
        <shortName evidence="1">Acs</shortName>
        <ecNumber evidence="1">6.2.1.1</ecNumber>
    </recommendedName>
    <alternativeName>
        <fullName evidence="1">Acetate--CoA ligase</fullName>
    </alternativeName>
    <alternativeName>
        <fullName evidence="1">Acyl-activating enzyme</fullName>
    </alternativeName>
</protein>
<name>ACSA_RHILO</name>
<sequence length="651" mass="72530">MSEVHVHRVQPAWKKNALIDNDTYLKWYADSIKNPDKFWGKHGKRIDWFKPFSKVKNTSFDGKVSIKWFEDGLTNVSYNCIDRHLKKRGDQTAIIWEGDNPYDDKKITYNELYERVCRLANVMKKHGVKKGDRVTIYMPMIPEAAYAMLACTRIGAIHSIVFGGFSPDALAGRIVDCESTFVITADEGLRGGKSIPLKENTDKAIDIAAKNFVMVKNVLVVRRTGGKVGWAPGRDLWYHDEVATVKAECKPEKMKAEDPLFILYTSGSTGKPKGVLHTTAGYLVYASMTHQYVFDYHDGDIYWCTADVGWVTGHSYIVYGPLANGATTLMFEGVPNYPSQSRFWEVIDKHKVNIFYTAPTALRALMGAGNDPVKKTSRKSLRVLGSVGEPINPEAWEWYFNVVGNGKVPIVDTWWQTETGGILITPLPGATDLKAGSATRPFFGVKPQLVDGEGKVLEGAADGNLCITDSWPGQMRTVYGDHDRFVQTYFSTYKGKYFTGDGCRRDADGYYWITGRVDDVINVSGHRMGTAEVESALVSHDKVSEAAVVGYPHDIKGQGIYSYVTLMKGEEPTEDLRKELIAHVRKEIGAIASPDKIQFAPGLPKTRSGKIMRRILRKIAEDDFSTLGDTSTLADPAVVDDLIANRQNKKG</sequence>
<organism>
    <name type="scientific">Mesorhizobium japonicum (strain LMG 29417 / CECT 9101 / MAFF 303099)</name>
    <name type="common">Mesorhizobium loti (strain MAFF 303099)</name>
    <dbReference type="NCBI Taxonomy" id="266835"/>
    <lineage>
        <taxon>Bacteria</taxon>
        <taxon>Pseudomonadati</taxon>
        <taxon>Pseudomonadota</taxon>
        <taxon>Alphaproteobacteria</taxon>
        <taxon>Hyphomicrobiales</taxon>
        <taxon>Phyllobacteriaceae</taxon>
        <taxon>Mesorhizobium</taxon>
    </lineage>
</organism>
<gene>
    <name evidence="1" type="primary">acsA</name>
    <name type="ordered locus">mlr4089</name>
</gene>
<dbReference type="EC" id="6.2.1.1" evidence="1"/>
<dbReference type="EMBL" id="BA000012">
    <property type="protein sequence ID" value="BAB50829.1"/>
    <property type="molecule type" value="Genomic_DNA"/>
</dbReference>
<dbReference type="RefSeq" id="WP_010912172.1">
    <property type="nucleotide sequence ID" value="NC_002678.2"/>
</dbReference>
<dbReference type="SMR" id="Q98ET8"/>
<dbReference type="KEGG" id="mlo:mlr4089"/>
<dbReference type="PATRIC" id="fig|266835.9.peg.3234"/>
<dbReference type="eggNOG" id="COG0365">
    <property type="taxonomic scope" value="Bacteria"/>
</dbReference>
<dbReference type="HOGENOM" id="CLU_000022_3_6_5"/>
<dbReference type="Proteomes" id="UP000000552">
    <property type="component" value="Chromosome"/>
</dbReference>
<dbReference type="GO" id="GO:0005829">
    <property type="term" value="C:cytosol"/>
    <property type="evidence" value="ECO:0007669"/>
    <property type="project" value="TreeGrafter"/>
</dbReference>
<dbReference type="GO" id="GO:0003987">
    <property type="term" value="F:acetate-CoA ligase activity"/>
    <property type="evidence" value="ECO:0007669"/>
    <property type="project" value="UniProtKB-UniRule"/>
</dbReference>
<dbReference type="GO" id="GO:0016208">
    <property type="term" value="F:AMP binding"/>
    <property type="evidence" value="ECO:0007669"/>
    <property type="project" value="InterPro"/>
</dbReference>
<dbReference type="GO" id="GO:0005524">
    <property type="term" value="F:ATP binding"/>
    <property type="evidence" value="ECO:0007669"/>
    <property type="project" value="UniProtKB-KW"/>
</dbReference>
<dbReference type="GO" id="GO:0046872">
    <property type="term" value="F:metal ion binding"/>
    <property type="evidence" value="ECO:0007669"/>
    <property type="project" value="UniProtKB-KW"/>
</dbReference>
<dbReference type="GO" id="GO:0019427">
    <property type="term" value="P:acetyl-CoA biosynthetic process from acetate"/>
    <property type="evidence" value="ECO:0007669"/>
    <property type="project" value="InterPro"/>
</dbReference>
<dbReference type="CDD" id="cd05966">
    <property type="entry name" value="ACS"/>
    <property type="match status" value="1"/>
</dbReference>
<dbReference type="FunFam" id="3.30.300.30:FF:000004">
    <property type="entry name" value="Acetyl-coenzyme A synthetase"/>
    <property type="match status" value="1"/>
</dbReference>
<dbReference type="FunFam" id="3.40.50.12780:FF:000001">
    <property type="entry name" value="Acetyl-coenzyme A synthetase"/>
    <property type="match status" value="1"/>
</dbReference>
<dbReference type="Gene3D" id="3.30.300.30">
    <property type="match status" value="1"/>
</dbReference>
<dbReference type="Gene3D" id="3.40.50.12780">
    <property type="entry name" value="N-terminal domain of ligase-like"/>
    <property type="match status" value="1"/>
</dbReference>
<dbReference type="HAMAP" id="MF_01123">
    <property type="entry name" value="Ac_CoA_synth"/>
    <property type="match status" value="1"/>
</dbReference>
<dbReference type="InterPro" id="IPR011904">
    <property type="entry name" value="Ac_CoA_lig"/>
</dbReference>
<dbReference type="InterPro" id="IPR032387">
    <property type="entry name" value="ACAS_N"/>
</dbReference>
<dbReference type="InterPro" id="IPR025110">
    <property type="entry name" value="AMP-bd_C"/>
</dbReference>
<dbReference type="InterPro" id="IPR045851">
    <property type="entry name" value="AMP-bd_C_sf"/>
</dbReference>
<dbReference type="InterPro" id="IPR020845">
    <property type="entry name" value="AMP-binding_CS"/>
</dbReference>
<dbReference type="InterPro" id="IPR000873">
    <property type="entry name" value="AMP-dep_synth/lig_dom"/>
</dbReference>
<dbReference type="InterPro" id="IPR042099">
    <property type="entry name" value="ANL_N_sf"/>
</dbReference>
<dbReference type="NCBIfam" id="TIGR02188">
    <property type="entry name" value="Ac_CoA_lig_AcsA"/>
    <property type="match status" value="1"/>
</dbReference>
<dbReference type="NCBIfam" id="NF001208">
    <property type="entry name" value="PRK00174.1"/>
    <property type="match status" value="1"/>
</dbReference>
<dbReference type="PANTHER" id="PTHR24095">
    <property type="entry name" value="ACETYL-COENZYME A SYNTHETASE"/>
    <property type="match status" value="1"/>
</dbReference>
<dbReference type="PANTHER" id="PTHR24095:SF14">
    <property type="entry name" value="ACETYL-COENZYME A SYNTHETASE 1"/>
    <property type="match status" value="1"/>
</dbReference>
<dbReference type="Pfam" id="PF16177">
    <property type="entry name" value="ACAS_N"/>
    <property type="match status" value="1"/>
</dbReference>
<dbReference type="Pfam" id="PF00501">
    <property type="entry name" value="AMP-binding"/>
    <property type="match status" value="1"/>
</dbReference>
<dbReference type="Pfam" id="PF13193">
    <property type="entry name" value="AMP-binding_C"/>
    <property type="match status" value="1"/>
</dbReference>
<dbReference type="SUPFAM" id="SSF56801">
    <property type="entry name" value="Acetyl-CoA synthetase-like"/>
    <property type="match status" value="1"/>
</dbReference>
<dbReference type="PROSITE" id="PS00455">
    <property type="entry name" value="AMP_BINDING"/>
    <property type="match status" value="1"/>
</dbReference>
<reference key="1">
    <citation type="journal article" date="2000" name="DNA Res.">
        <title>Complete genome structure of the nitrogen-fixing symbiotic bacterium Mesorhizobium loti.</title>
        <authorList>
            <person name="Kaneko T."/>
            <person name="Nakamura Y."/>
            <person name="Sato S."/>
            <person name="Asamizu E."/>
            <person name="Kato T."/>
            <person name="Sasamoto S."/>
            <person name="Watanabe A."/>
            <person name="Idesawa K."/>
            <person name="Ishikawa A."/>
            <person name="Kawashima K."/>
            <person name="Kimura T."/>
            <person name="Kishida Y."/>
            <person name="Kiyokawa C."/>
            <person name="Kohara M."/>
            <person name="Matsumoto M."/>
            <person name="Matsuno A."/>
            <person name="Mochizuki Y."/>
            <person name="Nakayama S."/>
            <person name="Nakazaki N."/>
            <person name="Shimpo S."/>
            <person name="Sugimoto M."/>
            <person name="Takeuchi C."/>
            <person name="Yamada M."/>
            <person name="Tabata S."/>
        </authorList>
    </citation>
    <scope>NUCLEOTIDE SEQUENCE [LARGE SCALE GENOMIC DNA]</scope>
    <source>
        <strain>LMG 29417 / CECT 9101 / MAFF 303099</strain>
    </source>
</reference>
<accession>Q98ET8</accession>
<keyword id="KW-0007">Acetylation</keyword>
<keyword id="KW-0067">ATP-binding</keyword>
<keyword id="KW-0436">Ligase</keyword>
<keyword id="KW-0460">Magnesium</keyword>
<keyword id="KW-0479">Metal-binding</keyword>
<keyword id="KW-0547">Nucleotide-binding</keyword>